<gene>
    <name type="primary">rps1001</name>
    <name type="synonym">rps10</name>
    <name type="synonym">rps10a</name>
    <name type="ORF">SPAC31G5.17c</name>
</gene>
<dbReference type="EMBL" id="CU329670">
    <property type="protein sequence ID" value="CAB11701.1"/>
    <property type="molecule type" value="Genomic_DNA"/>
</dbReference>
<dbReference type="PIR" id="T38634">
    <property type="entry name" value="T38634"/>
</dbReference>
<dbReference type="RefSeq" id="NP_594018.1">
    <property type="nucleotide sequence ID" value="NM_001019444.2"/>
</dbReference>
<dbReference type="SMR" id="O14112"/>
<dbReference type="BioGRID" id="279017">
    <property type="interactions" value="34"/>
</dbReference>
<dbReference type="FunCoup" id="O14112">
    <property type="interactions" value="556"/>
</dbReference>
<dbReference type="STRING" id="284812.O14112"/>
<dbReference type="iPTMnet" id="O14112"/>
<dbReference type="PaxDb" id="4896-SPAC31G5.17c.1"/>
<dbReference type="EnsemblFungi" id="SPAC31G5.17c.1">
    <property type="protein sequence ID" value="SPAC31G5.17c.1:pep"/>
    <property type="gene ID" value="SPAC31G5.17c"/>
</dbReference>
<dbReference type="GeneID" id="2542561"/>
<dbReference type="KEGG" id="spo:2542561"/>
<dbReference type="PomBase" id="SPAC31G5.17c">
    <property type="gene designation" value="rps1001"/>
</dbReference>
<dbReference type="VEuPathDB" id="FungiDB:SPAC31G5.17c"/>
<dbReference type="eggNOG" id="KOG3344">
    <property type="taxonomic scope" value="Eukaryota"/>
</dbReference>
<dbReference type="HOGENOM" id="CLU_089349_0_1_1"/>
<dbReference type="InParanoid" id="O14112"/>
<dbReference type="OMA" id="ERTKIHR"/>
<dbReference type="PhylomeDB" id="O14112"/>
<dbReference type="PRO" id="PR:O14112"/>
<dbReference type="Proteomes" id="UP000002485">
    <property type="component" value="Chromosome I"/>
</dbReference>
<dbReference type="GO" id="GO:0005829">
    <property type="term" value="C:cytosol"/>
    <property type="evidence" value="ECO:0007005"/>
    <property type="project" value="PomBase"/>
</dbReference>
<dbReference type="GO" id="GO:0022627">
    <property type="term" value="C:cytosolic small ribosomal subunit"/>
    <property type="evidence" value="ECO:0000318"/>
    <property type="project" value="GO_Central"/>
</dbReference>
<dbReference type="GO" id="GO:0003723">
    <property type="term" value="F:RNA binding"/>
    <property type="evidence" value="ECO:0000318"/>
    <property type="project" value="GO_Central"/>
</dbReference>
<dbReference type="GO" id="GO:0003735">
    <property type="term" value="F:structural constituent of ribosome"/>
    <property type="evidence" value="ECO:0000318"/>
    <property type="project" value="GO_Central"/>
</dbReference>
<dbReference type="GO" id="GO:0002181">
    <property type="term" value="P:cytoplasmic translation"/>
    <property type="evidence" value="ECO:0000266"/>
    <property type="project" value="PomBase"/>
</dbReference>
<dbReference type="FunFam" id="1.10.10.10:FF:000025">
    <property type="entry name" value="40S ribosomal protein S10"/>
    <property type="match status" value="1"/>
</dbReference>
<dbReference type="Gene3D" id="1.10.10.10">
    <property type="entry name" value="Winged helix-like DNA-binding domain superfamily/Winged helix DNA-binding domain"/>
    <property type="match status" value="1"/>
</dbReference>
<dbReference type="InterPro" id="IPR005326">
    <property type="entry name" value="Plectin_eS10_N"/>
</dbReference>
<dbReference type="InterPro" id="IPR037447">
    <property type="entry name" value="Ribosomal_eS10"/>
</dbReference>
<dbReference type="InterPro" id="IPR036388">
    <property type="entry name" value="WH-like_DNA-bd_sf"/>
</dbReference>
<dbReference type="PANTHER" id="PTHR12146">
    <property type="entry name" value="40S RIBOSOMAL PROTEIN S10"/>
    <property type="match status" value="1"/>
</dbReference>
<dbReference type="PANTHER" id="PTHR12146:SF0">
    <property type="entry name" value="RIBOSOMAL PROTEIN S10"/>
    <property type="match status" value="1"/>
</dbReference>
<dbReference type="Pfam" id="PF03501">
    <property type="entry name" value="S10_plectin"/>
    <property type="match status" value="1"/>
</dbReference>
<proteinExistence type="inferred from homology"/>
<sequence length="144" mass="16276">MLIPKENRKAIHQALFSQGVLVAKKDFNLPKHPEVGVPNLQVIKACQSLDSRGYLKTRYNWGWFYYTLTNEGVEYLREYLHLPAEVVPATHKRQVRPTAPRAGRPEPRERASADAGYRRAEKKDEGAAPSGFAPSFRGGFGRPQ</sequence>
<comment type="function">
    <text evidence="1">Component of the ribosome, a large ribonucleoprotein complex responsible for the synthesis of proteins in the cell. The small ribosomal subunit (SSU) binds messenger RNAs (mRNAs) and translates the encoded message by selecting cognate aminoacyl-transfer RNA (tRNA) molecules. The large subunit (LSU) contains the ribosomal catalytic site termed the peptidyl transferase center (PTC), which catalyzes the formation of peptide bonds, thereby polymerizing the amino acids delivered by tRNAs into a polypeptide chain. The nascent polypeptides leave the ribosome through a tunnel in the LSU and interact with protein factors that function in enzymatic processing, targeting, and the membrane insertion of nascent chains at the exit of the ribosomal tunnel. eS10 plays a role as a positive regulator of the GCN2 kinase activity by stimulating GCN1-mediated GCN2 activation.</text>
</comment>
<comment type="subunit">
    <text evidence="1">Component of the small ribosomal subunit (SSU). Mature yeast ribosomes consist of a small (40S) and a large (60S) subunit. The 40S small subunit contains 1 molecule of ribosomal RNA (18S rRNA) and at least 33 different proteins. The large 60S subunit contains 3 rRNA molecules (25S, 5.8S and 5S rRNA) and at least 46 different proteins. eS10 interacts with GCN1 (via middle region); this interaction is direct and promotes GCN2 kinase activity.</text>
</comment>
<comment type="subcellular location">
    <subcellularLocation>
        <location evidence="3">Cytoplasm</location>
    </subcellularLocation>
</comment>
<comment type="miscellaneous">
    <text>There are 2 genes for eS10 in S.pombe.</text>
</comment>
<comment type="similarity">
    <text evidence="4">Belongs to the eukaryotic ribosomal protein eS10 family.</text>
</comment>
<name>RS10A_SCHPO</name>
<organism>
    <name type="scientific">Schizosaccharomyces pombe (strain 972 / ATCC 24843)</name>
    <name type="common">Fission yeast</name>
    <dbReference type="NCBI Taxonomy" id="284812"/>
    <lineage>
        <taxon>Eukaryota</taxon>
        <taxon>Fungi</taxon>
        <taxon>Dikarya</taxon>
        <taxon>Ascomycota</taxon>
        <taxon>Taphrinomycotina</taxon>
        <taxon>Schizosaccharomycetes</taxon>
        <taxon>Schizosaccharomycetales</taxon>
        <taxon>Schizosaccharomycetaceae</taxon>
        <taxon>Schizosaccharomyces</taxon>
    </lineage>
</organism>
<protein>
    <recommendedName>
        <fullName evidence="4">Small ribosomal subunit protein eS10A</fullName>
    </recommendedName>
    <alternativeName>
        <fullName>40S ribosomal protein S10-A</fullName>
    </alternativeName>
</protein>
<feature type="chain" id="PRO_0000116374" description="Small ribosomal subunit protein eS10A">
    <location>
        <begin position="1"/>
        <end position="144"/>
    </location>
</feature>
<feature type="region of interest" description="Disordered" evidence="2">
    <location>
        <begin position="90"/>
        <end position="144"/>
    </location>
</feature>
<feature type="compositionally biased region" description="Basic and acidic residues" evidence="2">
    <location>
        <begin position="103"/>
        <end position="126"/>
    </location>
</feature>
<reference key="1">
    <citation type="journal article" date="2002" name="Nature">
        <title>The genome sequence of Schizosaccharomyces pombe.</title>
        <authorList>
            <person name="Wood V."/>
            <person name="Gwilliam R."/>
            <person name="Rajandream M.A."/>
            <person name="Lyne M.H."/>
            <person name="Lyne R."/>
            <person name="Stewart A."/>
            <person name="Sgouros J.G."/>
            <person name="Peat N."/>
            <person name="Hayles J."/>
            <person name="Baker S.G."/>
            <person name="Basham D."/>
            <person name="Bowman S."/>
            <person name="Brooks K."/>
            <person name="Brown D."/>
            <person name="Brown S."/>
            <person name="Chillingworth T."/>
            <person name="Churcher C.M."/>
            <person name="Collins M."/>
            <person name="Connor R."/>
            <person name="Cronin A."/>
            <person name="Davis P."/>
            <person name="Feltwell T."/>
            <person name="Fraser A."/>
            <person name="Gentles S."/>
            <person name="Goble A."/>
            <person name="Hamlin N."/>
            <person name="Harris D.E."/>
            <person name="Hidalgo J."/>
            <person name="Hodgson G."/>
            <person name="Holroyd S."/>
            <person name="Hornsby T."/>
            <person name="Howarth S."/>
            <person name="Huckle E.J."/>
            <person name="Hunt S."/>
            <person name="Jagels K."/>
            <person name="James K.D."/>
            <person name="Jones L."/>
            <person name="Jones M."/>
            <person name="Leather S."/>
            <person name="McDonald S."/>
            <person name="McLean J."/>
            <person name="Mooney P."/>
            <person name="Moule S."/>
            <person name="Mungall K.L."/>
            <person name="Murphy L.D."/>
            <person name="Niblett D."/>
            <person name="Odell C."/>
            <person name="Oliver K."/>
            <person name="O'Neil S."/>
            <person name="Pearson D."/>
            <person name="Quail M.A."/>
            <person name="Rabbinowitsch E."/>
            <person name="Rutherford K.M."/>
            <person name="Rutter S."/>
            <person name="Saunders D."/>
            <person name="Seeger K."/>
            <person name="Sharp S."/>
            <person name="Skelton J."/>
            <person name="Simmonds M.N."/>
            <person name="Squares R."/>
            <person name="Squares S."/>
            <person name="Stevens K."/>
            <person name="Taylor K."/>
            <person name="Taylor R.G."/>
            <person name="Tivey A."/>
            <person name="Walsh S.V."/>
            <person name="Warren T."/>
            <person name="Whitehead S."/>
            <person name="Woodward J.R."/>
            <person name="Volckaert G."/>
            <person name="Aert R."/>
            <person name="Robben J."/>
            <person name="Grymonprez B."/>
            <person name="Weltjens I."/>
            <person name="Vanstreels E."/>
            <person name="Rieger M."/>
            <person name="Schaefer M."/>
            <person name="Mueller-Auer S."/>
            <person name="Gabel C."/>
            <person name="Fuchs M."/>
            <person name="Duesterhoeft A."/>
            <person name="Fritzc C."/>
            <person name="Holzer E."/>
            <person name="Moestl D."/>
            <person name="Hilbert H."/>
            <person name="Borzym K."/>
            <person name="Langer I."/>
            <person name="Beck A."/>
            <person name="Lehrach H."/>
            <person name="Reinhardt R."/>
            <person name="Pohl T.M."/>
            <person name="Eger P."/>
            <person name="Zimmermann W."/>
            <person name="Wedler H."/>
            <person name="Wambutt R."/>
            <person name="Purnelle B."/>
            <person name="Goffeau A."/>
            <person name="Cadieu E."/>
            <person name="Dreano S."/>
            <person name="Gloux S."/>
            <person name="Lelaure V."/>
            <person name="Mottier S."/>
            <person name="Galibert F."/>
            <person name="Aves S.J."/>
            <person name="Xiang Z."/>
            <person name="Hunt C."/>
            <person name="Moore K."/>
            <person name="Hurst S.M."/>
            <person name="Lucas M."/>
            <person name="Rochet M."/>
            <person name="Gaillardin C."/>
            <person name="Tallada V.A."/>
            <person name="Garzon A."/>
            <person name="Thode G."/>
            <person name="Daga R.R."/>
            <person name="Cruzado L."/>
            <person name="Jimenez J."/>
            <person name="Sanchez M."/>
            <person name="del Rey F."/>
            <person name="Benito J."/>
            <person name="Dominguez A."/>
            <person name="Revuelta J.L."/>
            <person name="Moreno S."/>
            <person name="Armstrong J."/>
            <person name="Forsburg S.L."/>
            <person name="Cerutti L."/>
            <person name="Lowe T."/>
            <person name="McCombie W.R."/>
            <person name="Paulsen I."/>
            <person name="Potashkin J."/>
            <person name="Shpakovski G.V."/>
            <person name="Ussery D."/>
            <person name="Barrell B.G."/>
            <person name="Nurse P."/>
        </authorList>
    </citation>
    <scope>NUCLEOTIDE SEQUENCE [LARGE SCALE GENOMIC DNA]</scope>
    <source>
        <strain>972 / ATCC 24843</strain>
    </source>
</reference>
<reference key="2">
    <citation type="journal article" date="2006" name="Nat. Biotechnol.">
        <title>ORFeome cloning and global analysis of protein localization in the fission yeast Schizosaccharomyces pombe.</title>
        <authorList>
            <person name="Matsuyama A."/>
            <person name="Arai R."/>
            <person name="Yashiroda Y."/>
            <person name="Shirai A."/>
            <person name="Kamata A."/>
            <person name="Sekido S."/>
            <person name="Kobayashi Y."/>
            <person name="Hashimoto A."/>
            <person name="Hamamoto M."/>
            <person name="Hiraoka Y."/>
            <person name="Horinouchi S."/>
            <person name="Yoshida M."/>
        </authorList>
    </citation>
    <scope>SUBCELLULAR LOCATION [LARGE SCALE ANALYSIS]</scope>
</reference>
<evidence type="ECO:0000250" key="1">
    <source>
        <dbReference type="UniProtKB" id="Q08745"/>
    </source>
</evidence>
<evidence type="ECO:0000256" key="2">
    <source>
        <dbReference type="SAM" id="MobiDB-lite"/>
    </source>
</evidence>
<evidence type="ECO:0000269" key="3">
    <source>
    </source>
</evidence>
<evidence type="ECO:0000305" key="4"/>
<keyword id="KW-0963">Cytoplasm</keyword>
<keyword id="KW-1185">Reference proteome</keyword>
<keyword id="KW-0687">Ribonucleoprotein</keyword>
<keyword id="KW-0689">Ribosomal protein</keyword>
<accession>O14112</accession>